<sequence>MENELPVPHTSSSACATSSTSGASSSSGCNNSSSGGSGRPTGPQISVYSGIPDRQTVQVIQQALHRQPSTAAQYLQQMYAAQQQHLMLQTAALQQQHLSSAQLQSLAAVQQASLVSNRQGSTSGSNVSAQAPAQSSSINLAASPAAAQLLNRAQSVNSAAASGIAQQAVLLGNTSSPALTASQAQMYLRAQMLIFTPTATVATVQPELGTGSPARPPTPAQVQNLTLRTQQTPAAAASGPTPTQPVLPSLALKPTPGGSQPLPTPAQSRNTAQASPAGAKPGIADSVMEPHKKGDGNSSVPGSMEGRAGLSRTVPAVAAHPLIAPAYAQLQPHQLLPQPSSKHLQPQFVIQQQPQPQQQQPPPQQSRPVLQAEPHPQLASVSPSVALQPSSEAHAMPLGPVTPALPLQCPTANLHKPGGSQQCHPPTPDTGPQNGHPEGVPHTPQRRFQHTSAVILQLQPASPPQQCVPDDWKEVAPGEKSVPETRSGPSPHQQAIVTAMPGGLPVPTSPNIQPSPAHETGQGIVHALTDLSSPGMTSGNGNSASSIAGTAPQNGENKPPQAIVKPQILTHVIEGFVIQEGAEPFPVGRSSLLVGNLKKKYAQGFLPEKLPQQDHTTTTDSEMEEPYLQESKEEGAPLKLKCELCGRVDFAYKFKRSKRFCSMACAKRYNVGCTKRVGLFHSDRSKLQKAGAATHNRRRASKASLPPLTKDTKKQPTGTVPLSVTAALQLTHSQEDSSRCSDNSSYEEPLSPISASSSTSRRRQGQRDLELPDMHMRDLVGMGHHFLPSEPTKWNVEDVYEFIRSLPGCQEIAEEFRAQEIDGQALLLLKEDHLMSAMNIKLGPALKIYARISMLKDS</sequence>
<protein>
    <recommendedName>
        <fullName>Polyhomeotic-like protein 2</fullName>
        <shortName>hPH2</shortName>
    </recommendedName>
    <alternativeName>
        <fullName>Early development regulatory protein 2</fullName>
    </alternativeName>
</protein>
<evidence type="ECO:0000250" key="1">
    <source>
        <dbReference type="UniProtKB" id="Q9QWH1"/>
    </source>
</evidence>
<evidence type="ECO:0000255" key="2">
    <source>
        <dbReference type="PROSITE-ProRule" id="PRU00184"/>
    </source>
</evidence>
<evidence type="ECO:0000255" key="3">
    <source>
        <dbReference type="PROSITE-ProRule" id="PRU00367"/>
    </source>
</evidence>
<evidence type="ECO:0000256" key="4">
    <source>
        <dbReference type="SAM" id="MobiDB-lite"/>
    </source>
</evidence>
<evidence type="ECO:0000269" key="5">
    <source>
    </source>
</evidence>
<evidence type="ECO:0000269" key="6">
    <source>
    </source>
</evidence>
<evidence type="ECO:0000269" key="7">
    <source>
    </source>
</evidence>
<evidence type="ECO:0000269" key="8">
    <source>
    </source>
</evidence>
<evidence type="ECO:0000269" key="9">
    <source>
    </source>
</evidence>
<evidence type="ECO:0000269" key="10">
    <source>
    </source>
</evidence>
<evidence type="ECO:0000269" key="11">
    <source>
    </source>
</evidence>
<evidence type="ECO:0000269" key="12">
    <source>
    </source>
</evidence>
<evidence type="ECO:0000269" key="13">
    <source>
    </source>
</evidence>
<evidence type="ECO:0000303" key="14">
    <source>
    </source>
</evidence>
<evidence type="ECO:0000303" key="15">
    <source>
    </source>
</evidence>
<evidence type="ECO:0000305" key="16"/>
<evidence type="ECO:0007744" key="17">
    <source>
    </source>
</evidence>
<evidence type="ECO:0007744" key="18">
    <source>
    </source>
</evidence>
<evidence type="ECO:0007744" key="19">
    <source>
    </source>
</evidence>
<organism>
    <name type="scientific">Homo sapiens</name>
    <name type="common">Human</name>
    <dbReference type="NCBI Taxonomy" id="9606"/>
    <lineage>
        <taxon>Eukaryota</taxon>
        <taxon>Metazoa</taxon>
        <taxon>Chordata</taxon>
        <taxon>Craniata</taxon>
        <taxon>Vertebrata</taxon>
        <taxon>Euteleostomi</taxon>
        <taxon>Mammalia</taxon>
        <taxon>Eutheria</taxon>
        <taxon>Euarchontoglires</taxon>
        <taxon>Primates</taxon>
        <taxon>Haplorrhini</taxon>
        <taxon>Catarrhini</taxon>
        <taxon>Hominidae</taxon>
        <taxon>Homo</taxon>
    </lineage>
</organism>
<keyword id="KW-0025">Alternative splicing</keyword>
<keyword id="KW-0217">Developmental protein</keyword>
<keyword id="KW-0238">DNA-binding</keyword>
<keyword id="KW-1017">Isopeptide bond</keyword>
<keyword id="KW-0479">Metal-binding</keyword>
<keyword id="KW-0539">Nucleus</keyword>
<keyword id="KW-0597">Phosphoprotein</keyword>
<keyword id="KW-1267">Proteomics identification</keyword>
<keyword id="KW-1185">Reference proteome</keyword>
<keyword id="KW-0832">Ubl conjugation</keyword>
<keyword id="KW-0862">Zinc</keyword>
<keyword id="KW-0863">Zinc-finger</keyword>
<comment type="function">
    <text>Component of a Polycomb group (PcG) multiprotein PRC1-like complex, a complex class required to maintain the transcriptionally repressive state of many genes, including Hox genes, throughout development. PcG PRC1 complex acts via chromatin remodeling and modification of histones; it mediates monoubiquitination of histone H2A 'Lys-119', rendering chromatin heritably changed in its expressibility.</text>
</comment>
<comment type="subunit">
    <text evidence="1 5 6 7 8 10 11 12 13">Component of a PRC1-like complex (PubMed:12167701, PubMed:15386022, PubMed:19636380, PubMed:21282530). Interacts with CBX4 (PubMed:21282530). Interacts with BMI1, PCGF2, PHC1 and RNF2 (PubMed:12167701, PubMed:9121482, PubMed:9199346). Interacts with CHTOP (By similarity). Interacts with the N-terminal region of the SP1 transcription factor and with MAPKAPK2 (PubMed:10976766, PubMed:15094067). Interacts with SAMD7 and SAMD11 (By similarity).</text>
</comment>
<comment type="interaction">
    <interactant intactId="EBI-713786">
        <id>Q8IXK0</id>
    </interactant>
    <interactant intactId="EBI-8637627">
        <id>Q8WTP8</id>
        <label>AEN</label>
    </interactant>
    <organismsDiffer>false</organismsDiffer>
    <experiments>3</experiments>
</comment>
<comment type="interaction">
    <interactant intactId="EBI-713786">
        <id>Q8IXK0</id>
    </interactant>
    <interactant intactId="EBI-8643161">
        <id>Q9NX04</id>
        <label>AIRIM</label>
    </interactant>
    <organismsDiffer>false</organismsDiffer>
    <experiments>3</experiments>
</comment>
<comment type="interaction">
    <interactant intactId="EBI-713786">
        <id>Q8IXK0</id>
    </interactant>
    <interactant intactId="EBI-541426">
        <id>Q9BXS5</id>
        <label>AP1M1</label>
    </interactant>
    <organismsDiffer>false</organismsDiffer>
    <experiments>3</experiments>
</comment>
<comment type="interaction">
    <interactant intactId="EBI-713786">
        <id>Q8IXK0</id>
    </interactant>
    <interactant intactId="EBI-2341576">
        <id>P35226</id>
        <label>BMI1</label>
    </interactant>
    <organismsDiffer>false</organismsDiffer>
    <experiments>10</experiments>
</comment>
<comment type="interaction">
    <interactant intactId="EBI-713786">
        <id>Q8IXK0</id>
    </interactant>
    <interactant intactId="EBI-358049">
        <id>Q13895</id>
        <label>BYSL</label>
    </interactant>
    <organismsDiffer>false</organismsDiffer>
    <experiments>6</experiments>
</comment>
<comment type="interaction">
    <interactant intactId="EBI-713786">
        <id>Q8IXK0</id>
    </interactant>
    <interactant intactId="EBI-751319">
        <id>Q9H257</id>
        <label>CARD9</label>
    </interactant>
    <organismsDiffer>false</organismsDiffer>
    <experiments>3</experiments>
</comment>
<comment type="interaction">
    <interactant intactId="EBI-713786">
        <id>Q8IXK0</id>
    </interactant>
    <interactant intactId="EBI-712912">
        <id>Q9HC52</id>
        <label>CBX8</label>
    </interactant>
    <organismsDiffer>false</organismsDiffer>
    <experiments>8</experiments>
</comment>
<comment type="interaction">
    <interactant intactId="EBI-713786">
        <id>Q8IXK0</id>
    </interactant>
    <interactant intactId="EBI-719554">
        <id>Q9Y295</id>
        <label>DRG1</label>
    </interactant>
    <organismsDiffer>false</organismsDiffer>
    <experiments>4</experiments>
</comment>
<comment type="interaction">
    <interactant intactId="EBI-713786">
        <id>Q8IXK0</id>
    </interactant>
    <interactant intactId="EBI-744099">
        <id>Q9H0I2</id>
        <label>ENKD1</label>
    </interactant>
    <organismsDiffer>false</organismsDiffer>
    <experiments>4</experiments>
</comment>
<comment type="interaction">
    <interactant intactId="EBI-713786">
        <id>Q8IXK0</id>
    </interactant>
    <interactant intactId="EBI-744506">
        <id>Q86V42</id>
        <label>FAM124A</label>
    </interactant>
    <organismsDiffer>false</organismsDiffer>
    <experiments>3</experiments>
</comment>
<comment type="interaction">
    <interactant intactId="EBI-713786">
        <id>Q8IXK0</id>
    </interactant>
    <interactant intactId="EBI-751248">
        <id>Q8NE31</id>
        <label>FAM13C</label>
    </interactant>
    <organismsDiffer>false</organismsDiffer>
    <experiments>3</experiments>
</comment>
<comment type="interaction">
    <interactant intactId="EBI-713786">
        <id>Q8IXK0</id>
    </interactant>
    <interactant intactId="EBI-719941">
        <id>Q3B820</id>
        <label>FAM161A</label>
    </interactant>
    <organismsDiffer>false</organismsDiffer>
    <experiments>3</experiments>
</comment>
<comment type="interaction">
    <interactant intactId="EBI-713786">
        <id>Q8IXK0</id>
    </interactant>
    <interactant intactId="EBI-399080">
        <id>Q92993</id>
        <label>KAT5</label>
    </interactant>
    <organismsDiffer>false</organismsDiffer>
    <experiments>3</experiments>
</comment>
<comment type="interaction">
    <interactant intactId="EBI-713786">
        <id>Q8IXK0</id>
    </interactant>
    <interactant intactId="EBI-473695">
        <id>Q8WVZ9</id>
        <label>KBTBD7</label>
    </interactant>
    <organismsDiffer>false</organismsDiffer>
    <experiments>3</experiments>
</comment>
<comment type="interaction">
    <interactant intactId="EBI-713786">
        <id>Q8IXK0</id>
    </interactant>
    <interactant intactId="EBI-2125614">
        <id>Q9BVG8</id>
        <label>KIFC3</label>
    </interactant>
    <organismsDiffer>false</organismsDiffer>
    <experiments>3</experiments>
</comment>
<comment type="interaction">
    <interactant intactId="EBI-713786">
        <id>Q8IXK0</id>
    </interactant>
    <interactant intactId="EBI-2686809">
        <id>Q96JM7</id>
        <label>L3MBTL3</label>
    </interactant>
    <organismsDiffer>false</organismsDiffer>
    <experiments>6</experiments>
</comment>
<comment type="interaction">
    <interactant intactId="EBI-713786">
        <id>Q8IXK0</id>
    </interactant>
    <interactant intactId="EBI-8639312">
        <id>P25800</id>
        <label>LMO1</label>
    </interactant>
    <organismsDiffer>false</organismsDiffer>
    <experiments>3</experiments>
</comment>
<comment type="interaction">
    <interactant intactId="EBI-713786">
        <id>Q8IXK0</id>
    </interactant>
    <interactant intactId="EBI-739696">
        <id>P25791</id>
        <label>LMO2</label>
    </interactant>
    <organismsDiffer>false</organismsDiffer>
    <experiments>4</experiments>
</comment>
<comment type="interaction">
    <interactant intactId="EBI-713786">
        <id>Q8IXK0</id>
    </interactant>
    <interactant intactId="EBI-10268010">
        <id>Q8N8X9</id>
        <label>MAB21L3</label>
    </interactant>
    <organismsDiffer>false</organismsDiffer>
    <experiments>3</experiments>
</comment>
<comment type="interaction">
    <interactant intactId="EBI-713786">
        <id>Q8IXK0</id>
    </interactant>
    <interactant intactId="EBI-6447163">
        <id>Q8N7X4</id>
        <label>MAGEB6</label>
    </interactant>
    <organismsDiffer>false</organismsDiffer>
    <experiments>3</experiments>
</comment>
<comment type="interaction">
    <interactant intactId="EBI-713786">
        <id>Q8IXK0</id>
    </interactant>
    <interactant intactId="EBI-348259">
        <id>Q96EZ8</id>
        <label>MCRS1</label>
    </interactant>
    <organismsDiffer>false</organismsDiffer>
    <experiments>2</experiments>
</comment>
<comment type="interaction">
    <interactant intactId="EBI-713786">
        <id>Q8IXK0</id>
    </interactant>
    <interactant intactId="EBI-1048159">
        <id>P55081</id>
        <label>MFAP1</label>
    </interactant>
    <organismsDiffer>false</organismsDiffer>
    <experiments>3</experiments>
</comment>
<comment type="interaction">
    <interactant intactId="EBI-713786">
        <id>Q8IXK0</id>
    </interactant>
    <interactant intactId="EBI-399257">
        <id>Q15014</id>
        <label>MORF4L2</label>
    </interactant>
    <organismsDiffer>false</organismsDiffer>
    <experiments>3</experiments>
</comment>
<comment type="interaction">
    <interactant intactId="EBI-713786">
        <id>Q8IXK0</id>
    </interactant>
    <interactant intactId="EBI-2129767">
        <id>P35227</id>
        <label>PCGF2</label>
    </interactant>
    <organismsDiffer>false</organismsDiffer>
    <experiments>10</experiments>
</comment>
<comment type="interaction">
    <interactant intactId="EBI-713786">
        <id>Q8IXK0</id>
    </interactant>
    <interactant intactId="EBI-2339807">
        <id>Q3KNV8</id>
        <label>PCGF3</label>
    </interactant>
    <organismsDiffer>false</organismsDiffer>
    <experiments>3</experiments>
</comment>
<comment type="interaction">
    <interactant intactId="EBI-713786">
        <id>Q8IXK0</id>
    </interactant>
    <interactant intactId="EBI-2827999">
        <id>Q86SE9</id>
        <label>PCGF5</label>
    </interactant>
    <organismsDiffer>false</organismsDiffer>
    <experiments>3</experiments>
</comment>
<comment type="interaction">
    <interactant intactId="EBI-713786">
        <id>Q8IXK0</id>
    </interactant>
    <interactant intactId="EBI-725403">
        <id>P78364</id>
        <label>PHC1</label>
    </interactant>
    <organismsDiffer>false</organismsDiffer>
    <experiments>3</experiments>
</comment>
<comment type="interaction">
    <interactant intactId="EBI-713786">
        <id>Q8IXK0</id>
    </interactant>
    <interactant intactId="EBI-713786">
        <id>Q8IXK0</id>
        <label>PHC2</label>
    </interactant>
    <organismsDiffer>false</organismsDiffer>
    <experiments>3</experiments>
</comment>
<comment type="interaction">
    <interactant intactId="EBI-713786">
        <id>Q8IXK0</id>
    </interactant>
    <interactant intactId="EBI-476768">
        <id>P53350</id>
        <label>PLK1</label>
    </interactant>
    <organismsDiffer>false</organismsDiffer>
    <experiments>2</experiments>
</comment>
<comment type="interaction">
    <interactant intactId="EBI-713786">
        <id>Q8IXK0</id>
    </interactant>
    <interactant intactId="EBI-359527">
        <id>P62875</id>
        <label>POLR2L</label>
    </interactant>
    <organismsDiffer>false</organismsDiffer>
    <experiments>3</experiments>
</comment>
<comment type="interaction">
    <interactant intactId="EBI-713786">
        <id>Q8IXK0</id>
    </interactant>
    <interactant intactId="EBI-10293968">
        <id>Q96T49</id>
        <label>PPP1R16B</label>
    </interactant>
    <organismsDiffer>false</organismsDiffer>
    <experiments>4</experiments>
</comment>
<comment type="interaction">
    <interactant intactId="EBI-713786">
        <id>Q8IXK0</id>
    </interactant>
    <interactant intactId="EBI-1181405">
        <id>Q13131</id>
        <label>PRKAA1</label>
    </interactant>
    <organismsDiffer>false</organismsDiffer>
    <experiments>3</experiments>
</comment>
<comment type="interaction">
    <interactant intactId="EBI-713786">
        <id>Q8IXK0</id>
    </interactant>
    <interactant intactId="EBI-1567797">
        <id>Q8WWY3</id>
        <label>PRPF31</label>
    </interactant>
    <organismsDiffer>false</organismsDiffer>
    <experiments>3</experiments>
</comment>
<comment type="interaction">
    <interactant intactId="EBI-713786">
        <id>Q8IXK0</id>
    </interactant>
    <interactant intactId="EBI-395290">
        <id>Q14498</id>
        <label>RBM39</label>
    </interactant>
    <organismsDiffer>false</organismsDiffer>
    <experiments>3</experiments>
</comment>
<comment type="interaction">
    <interactant intactId="EBI-713786">
        <id>Q8IXK0</id>
    </interactant>
    <interactant intactId="EBI-6654703">
        <id>Q14498-3</id>
        <label>RBM39</label>
    </interactant>
    <organismsDiffer>false</organismsDiffer>
    <experiments>3</experiments>
</comment>
<comment type="interaction">
    <interactant intactId="EBI-713786">
        <id>Q8IXK0</id>
    </interactant>
    <interactant intactId="EBI-724442">
        <id>P57060</id>
        <label>RWDD2B</label>
    </interactant>
    <organismsDiffer>false</organismsDiffer>
    <experiments>3</experiments>
</comment>
<comment type="interaction">
    <interactant intactId="EBI-713786">
        <id>Q8IXK0</id>
    </interactant>
    <interactant intactId="EBI-727004">
        <id>O00560</id>
        <label>SDCBP</label>
    </interactant>
    <organismsDiffer>false</organismsDiffer>
    <experiments>3</experiments>
</comment>
<comment type="interaction">
    <interactant intactId="EBI-713786">
        <id>Q8IXK0</id>
    </interactant>
    <interactant intactId="EBI-747398">
        <id>Q9UHJ3</id>
        <label>SFMBT1</label>
    </interactant>
    <organismsDiffer>false</organismsDiffer>
    <experiments>4</experiments>
</comment>
<comment type="interaction">
    <interactant intactId="EBI-713786">
        <id>Q8IXK0</id>
    </interactant>
    <interactant intactId="EBI-747107">
        <id>Q8IUQ4</id>
        <label>SIAH1</label>
    </interactant>
    <organismsDiffer>false</organismsDiffer>
    <experiments>5</experiments>
</comment>
<comment type="interaction">
    <interactant intactId="EBI-713786">
        <id>Q8IXK0</id>
    </interactant>
    <interactant intactId="EBI-347161">
        <id>P84022</id>
        <label>SMAD3</label>
    </interactant>
    <organismsDiffer>false</organismsDiffer>
    <experiments>3</experiments>
</comment>
<comment type="interaction">
    <interactant intactId="EBI-713786">
        <id>Q8IXK0</id>
    </interactant>
    <interactant intactId="EBI-298336">
        <id>P08047</id>
        <label>SP1</label>
    </interactant>
    <organismsDiffer>false</organismsDiffer>
    <experiments>2</experiments>
</comment>
<comment type="interaction">
    <interactant intactId="EBI-713786">
        <id>Q8IXK0</id>
    </interactant>
    <interactant intactId="EBI-2212028">
        <id>Q9Y2D8</id>
        <label>SSX2IP</label>
    </interactant>
    <organismsDiffer>false</organismsDiffer>
    <experiments>3</experiments>
</comment>
<comment type="interaction">
    <interactant intactId="EBI-713786">
        <id>Q8IXK0</id>
    </interactant>
    <interactant intactId="EBI-10238936">
        <id>Q17RD7</id>
        <label>SYT16</label>
    </interactant>
    <organismsDiffer>false</organismsDiffer>
    <experiments>3</experiments>
</comment>
<comment type="interaction">
    <interactant intactId="EBI-713786">
        <id>Q8IXK0</id>
    </interactant>
    <interactant intactId="EBI-741350">
        <id>Q9BT49</id>
        <label>THAP7</label>
    </interactant>
    <organismsDiffer>false</organismsDiffer>
    <experiments>3</experiments>
</comment>
<comment type="interaction">
    <interactant intactId="EBI-713786">
        <id>Q8IXK0</id>
    </interactant>
    <interactant intactId="EBI-725997">
        <id>Q8WV44</id>
        <label>TRIM41</label>
    </interactant>
    <organismsDiffer>false</organismsDiffer>
    <experiments>3</experiments>
</comment>
<comment type="interaction">
    <interactant intactId="EBI-713786">
        <id>Q8IXK0</id>
    </interactant>
    <interactant intactId="EBI-744471">
        <id>O43167</id>
        <label>ZBTB24</label>
    </interactant>
    <organismsDiffer>false</organismsDiffer>
    <experiments>3</experiments>
</comment>
<comment type="interaction">
    <interactant intactId="EBI-713786">
        <id>Q8IXK0</id>
    </interactant>
    <interactant intactId="EBI-3439227">
        <id>Q8N5A5</id>
        <label>ZGPAT</label>
    </interactant>
    <organismsDiffer>false</organismsDiffer>
    <experiments>3</experiments>
</comment>
<comment type="interaction">
    <interactant intactId="EBI-713786">
        <id>Q8IXK0</id>
    </interactant>
    <interactant intactId="EBI-10183064">
        <id>Q8N5A5-2</id>
        <label>ZGPAT</label>
    </interactant>
    <organismsDiffer>false</organismsDiffer>
    <experiments>3</experiments>
</comment>
<comment type="interaction">
    <interactant intactId="EBI-713786">
        <id>Q8IXK0</id>
    </interactant>
    <interactant intactId="EBI-2682299">
        <id>Q96NC0</id>
        <label>ZMAT2</label>
    </interactant>
    <organismsDiffer>false</organismsDiffer>
    <experiments>3</experiments>
</comment>
<comment type="interaction">
    <interactant intactId="EBI-713786">
        <id>Q8IXK0</id>
    </interactant>
    <interactant intactId="EBI-740727">
        <id>Q8TAU3</id>
        <label>ZNF417</label>
    </interactant>
    <organismsDiffer>false</organismsDiffer>
    <experiments>3</experiments>
</comment>
<comment type="interaction">
    <interactant intactId="EBI-713786">
        <id>Q8IXK0</id>
    </interactant>
    <interactant intactId="EBI-927401">
        <id>P25916</id>
        <label>Bmi1</label>
    </interactant>
    <organismsDiffer>true</organismsDiffer>
    <experiments>2</experiments>
</comment>
<comment type="interaction">
    <interactant intactId="EBI-10304199">
        <id>Q8IXK0-4</id>
    </interactant>
    <interactant intactId="EBI-372911">
        <id>Q9H0A9</id>
        <label>SPATC1L</label>
    </interactant>
    <organismsDiffer>false</organismsDiffer>
    <experiments>3</experiments>
</comment>
<comment type="interaction">
    <interactant intactId="EBI-11527347">
        <id>Q8IXK0-5</id>
    </interactant>
    <interactant intactId="EBI-21553822">
        <id>Q96A83-2</id>
        <label>COL26A1</label>
    </interactant>
    <organismsDiffer>false</organismsDiffer>
    <experiments>3</experiments>
</comment>
<comment type="interaction">
    <interactant intactId="EBI-11527347">
        <id>Q8IXK0-5</id>
    </interactant>
    <interactant intactId="EBI-948266">
        <id>O14901</id>
        <label>KLF11</label>
    </interactant>
    <organismsDiffer>false</organismsDiffer>
    <experiments>3</experiments>
</comment>
<comment type="interaction">
    <interactant intactId="EBI-11527347">
        <id>Q8IXK0-5</id>
    </interactant>
    <interactant intactId="EBI-744322">
        <id>O43395</id>
        <label>PRPF3</label>
    </interactant>
    <organismsDiffer>false</organismsDiffer>
    <experiments>3</experiments>
</comment>
<comment type="interaction">
    <interactant intactId="EBI-11527347">
        <id>Q8IXK0-5</id>
    </interactant>
    <interactant intactId="EBI-1567797">
        <id>Q8WWY3</id>
        <label>PRPF31</label>
    </interactant>
    <organismsDiffer>false</organismsDiffer>
    <experiments>3</experiments>
</comment>
<comment type="interaction">
    <interactant intactId="EBI-11527347">
        <id>Q8IXK0-5</id>
    </interactant>
    <interactant intactId="EBI-347161">
        <id>P84022</id>
        <label>SMAD3</label>
    </interactant>
    <organismsDiffer>false</organismsDiffer>
    <experiments>3</experiments>
</comment>
<comment type="subcellular location">
    <subcellularLocation>
        <location evidence="11">Nucleus</location>
    </subcellularLocation>
    <text evidence="1">Co-localizes with SAMD7 in nuclear polycomb bodies.</text>
</comment>
<comment type="alternative products">
    <event type="alternative splicing"/>
    <isoform>
        <id>Q8IXK0-1</id>
        <name>1</name>
        <sequence type="displayed"/>
    </isoform>
    <isoform>
        <id>Q8IXK0-2</id>
        <name>2</name>
        <name>isoform b</name>
        <sequence type="described" ref="VSP_016915"/>
    </isoform>
    <isoform>
        <id>Q8IXK0-3</id>
        <name>3</name>
        <sequence type="described" ref="VSP_016914 VSP_016916 VSP_016917 VSP_016918"/>
    </isoform>
    <isoform>
        <id>Q8IXK0-4</id>
        <name>4</name>
        <sequence type="described" ref="VSP_027217"/>
    </isoform>
    <isoform>
        <id>Q8IXK0-5</id>
        <name>5</name>
        <sequence type="described" ref="VSP_039755"/>
    </isoform>
</comment>
<comment type="domain">
    <text>HD1 motif interacts with SAM domain of PHC1.</text>
</comment>
<comment type="miscellaneous">
    <text>The hPRC-H complex purification reported by PubMed:12167701 probably presents a mixture of different PRC1-like complexes.</text>
</comment>
<comment type="sequence caution" evidence="16">
    <conflict type="erroneous initiation">
        <sequence resource="EMBL-CDS" id="AAH68573"/>
    </conflict>
    <text>Extended N-terminus.</text>
</comment>
<comment type="sequence caution" evidence="16">
    <conflict type="erroneous initiation">
        <sequence resource="EMBL-CDS" id="AAH92492"/>
    </conflict>
    <text>Extended N-terminus.</text>
</comment>
<accession>Q8IXK0</accession>
<accession>A1L4Q1</accession>
<accession>A8KA40</accession>
<accession>D3DPR2</accession>
<accession>Q2TAL3</accession>
<accession>Q5T0C1</accession>
<accession>Q6NUJ6</accession>
<accession>Q6ZQR1</accession>
<accession>Q8N306</accession>
<accession>Q8TAG8</accession>
<accession>Q96BL4</accession>
<accession>Q9Y4Y7</accession>
<dbReference type="EMBL" id="AJ419231">
    <property type="protein sequence ID" value="CAD11673.1"/>
    <property type="molecule type" value="mRNA"/>
</dbReference>
<dbReference type="EMBL" id="AK128821">
    <property type="protein sequence ID" value="BAC87622.1"/>
    <property type="molecule type" value="mRNA"/>
</dbReference>
<dbReference type="EMBL" id="AK292905">
    <property type="protein sequence ID" value="BAF85594.1"/>
    <property type="molecule type" value="mRNA"/>
</dbReference>
<dbReference type="EMBL" id="AL513327">
    <property type="status" value="NOT_ANNOTATED_CDS"/>
    <property type="molecule type" value="Genomic_DNA"/>
</dbReference>
<dbReference type="EMBL" id="CH471059">
    <property type="protein sequence ID" value="EAX07457.1"/>
    <property type="molecule type" value="Genomic_DNA"/>
</dbReference>
<dbReference type="EMBL" id="CH471059">
    <property type="protein sequence ID" value="EAX07458.1"/>
    <property type="molecule type" value="Genomic_DNA"/>
</dbReference>
<dbReference type="EMBL" id="CH471059">
    <property type="protein sequence ID" value="EAX07459.1"/>
    <property type="molecule type" value="Genomic_DNA"/>
</dbReference>
<dbReference type="EMBL" id="BC015450">
    <property type="protein sequence ID" value="AAH15450.1"/>
    <property type="molecule type" value="mRNA"/>
</dbReference>
<dbReference type="EMBL" id="BC028396">
    <property type="protein sequence ID" value="AAH28396.3"/>
    <property type="molecule type" value="mRNA"/>
</dbReference>
<dbReference type="EMBL" id="BC029269">
    <property type="protein sequence ID" value="AAH29269.1"/>
    <property type="molecule type" value="mRNA"/>
</dbReference>
<dbReference type="EMBL" id="BC068573">
    <property type="protein sequence ID" value="AAH68573.1"/>
    <property type="status" value="ALT_INIT"/>
    <property type="molecule type" value="mRNA"/>
</dbReference>
<dbReference type="EMBL" id="BC092492">
    <property type="protein sequence ID" value="AAH92492.1"/>
    <property type="status" value="ALT_INIT"/>
    <property type="molecule type" value="mRNA"/>
</dbReference>
<dbReference type="EMBL" id="BC110863">
    <property type="protein sequence ID" value="AAI10864.2"/>
    <property type="molecule type" value="mRNA"/>
</dbReference>
<dbReference type="EMBL" id="BC130630">
    <property type="protein sequence ID" value="AAI30631.1"/>
    <property type="molecule type" value="mRNA"/>
</dbReference>
<dbReference type="EMBL" id="AJ242730">
    <property type="protein sequence ID" value="CAB44779.1"/>
    <property type="molecule type" value="mRNA"/>
</dbReference>
<dbReference type="CCDS" id="CCDS378.1">
    <molecule id="Q8IXK0-1"/>
</dbReference>
<dbReference type="CCDS" id="CCDS379.1">
    <molecule id="Q8IXK0-2"/>
</dbReference>
<dbReference type="CCDS" id="CCDS90911.1">
    <molecule id="Q8IXK0-5"/>
</dbReference>
<dbReference type="RefSeq" id="NP_001372038.1">
    <molecule id="Q8IXK0-5"/>
    <property type="nucleotide sequence ID" value="NM_001385109.1"/>
</dbReference>
<dbReference type="RefSeq" id="NP_001372048.1">
    <molecule id="Q8IXK0-5"/>
    <property type="nucleotide sequence ID" value="NM_001385119.1"/>
</dbReference>
<dbReference type="RefSeq" id="NP_001372049.1">
    <molecule id="Q8IXK0-5"/>
    <property type="nucleotide sequence ID" value="NM_001385120.1"/>
</dbReference>
<dbReference type="RefSeq" id="NP_004418.2">
    <molecule id="Q8IXK0-2"/>
    <property type="nucleotide sequence ID" value="NM_004427.3"/>
</dbReference>
<dbReference type="RefSeq" id="NP_932157.1">
    <molecule id="Q8IXK0-1"/>
    <property type="nucleotide sequence ID" value="NM_198040.3"/>
</dbReference>
<dbReference type="RefSeq" id="XP_005270627.1">
    <property type="nucleotide sequence ID" value="XM_005270570.1"/>
</dbReference>
<dbReference type="RefSeq" id="XP_016856005.1">
    <property type="nucleotide sequence ID" value="XM_017000516.1"/>
</dbReference>
<dbReference type="RefSeq" id="XP_016856006.1">
    <property type="nucleotide sequence ID" value="XM_017000517.1"/>
</dbReference>
<dbReference type="RefSeq" id="XP_016856007.1">
    <property type="nucleotide sequence ID" value="XM_017000518.1"/>
</dbReference>
<dbReference type="SMR" id="Q8IXK0"/>
<dbReference type="BioGRID" id="108234">
    <property type="interactions" value="166"/>
</dbReference>
<dbReference type="ComplexPortal" id="CPX-2601">
    <property type="entry name" value="Polycomb repressive complex 1, RING1-PCGF2-CBX7-PHC2 variant"/>
</dbReference>
<dbReference type="ComplexPortal" id="CPX-2609">
    <property type="entry name" value="Polycomb repressive complex 1, RING1-PCGF2-CBX2-PHC2 variant"/>
</dbReference>
<dbReference type="ComplexPortal" id="CPX-2613">
    <property type="entry name" value="Polycomb repressive complex 1, RING1-PCGF2-CBX4-PHC2 variant"/>
</dbReference>
<dbReference type="ComplexPortal" id="CPX-2617">
    <property type="entry name" value="Polycomb repressive complex 1, RING1-PCGF2-CBX6-PHC2 variant"/>
</dbReference>
<dbReference type="ComplexPortal" id="CPX-2622">
    <property type="entry name" value="Polycomb repressive complex 1, RING1-PCGF2-CBX8-PHC2 variant"/>
</dbReference>
<dbReference type="ComplexPortal" id="CPX-7502">
    <property type="entry name" value="Polycomb repressive complex 1, RING1-PCGF4-CBX2-PHC2 variant"/>
</dbReference>
<dbReference type="ComplexPortal" id="CPX-7506">
    <property type="entry name" value="Polycomb repressive complex 1, RING1-PCGF4-CBX4-PHC2 variant"/>
</dbReference>
<dbReference type="ComplexPortal" id="CPX-7510">
    <property type="entry name" value="Polycomb repressive complex 1, RING1-PCGF4-CBX6-PHC2 variant"/>
</dbReference>
<dbReference type="ComplexPortal" id="CPX-7514">
    <property type="entry name" value="Polycomb repressive complex 1, RING1-PCGF4-CBX7-PHC2 variant"/>
</dbReference>
<dbReference type="ComplexPortal" id="CPX-7517">
    <property type="entry name" value="Polycomb repressive complex 1, RING1-PCGF4-CBX8-PHC2 variant"/>
</dbReference>
<dbReference type="ComplexPortal" id="CPX-7522">
    <property type="entry name" value="Polycomb repressive complex 1, RING2-PCGF2-CBX2-PHC2 variant"/>
</dbReference>
<dbReference type="ComplexPortal" id="CPX-7526">
    <property type="entry name" value="Polycomb repressive complex 1, RING2-PCGF2-CBX4-PHC2 variant"/>
</dbReference>
<dbReference type="ComplexPortal" id="CPX-7528">
    <property type="entry name" value="Polycomb repressive complex 1, RING2-PCGF2-CBX6-PHC2 variant"/>
</dbReference>
<dbReference type="ComplexPortal" id="CPX-7531">
    <property type="entry name" value="Polycomb repressive complex 1, RING2-PCGF2-CBX7-PHC2 variant"/>
</dbReference>
<dbReference type="ComplexPortal" id="CPX-7534">
    <property type="entry name" value="Polycomb repressive complex 1, RING2-PCGF2-CBX8-PHC2 variant"/>
</dbReference>
<dbReference type="ComplexPortal" id="CPX-7542">
    <property type="entry name" value="Polycomb repressive complex 1, RING2-PCGF4-CBX2-PHC2 variant"/>
</dbReference>
<dbReference type="ComplexPortal" id="CPX-7546">
    <property type="entry name" value="Polycomb repressive complex 1, RING2-PCGF4-CBX4-PHC2 variant"/>
</dbReference>
<dbReference type="ComplexPortal" id="CPX-7549">
    <property type="entry name" value="Polycomb repressive complex 1, RING2-PCGF4-CBX6-PHC2 variant"/>
</dbReference>
<dbReference type="ComplexPortal" id="CPX-7552">
    <property type="entry name" value="Polycomb repressive complex 1, RING2-PCGF4-CBX7-PHC2 variant"/>
</dbReference>
<dbReference type="ComplexPortal" id="CPX-7555">
    <property type="entry name" value="Polycomb repressive complex 1, RING2-PCGF4-CBX8-PHC2 variant"/>
</dbReference>
<dbReference type="CORUM" id="Q8IXK0"/>
<dbReference type="DIP" id="DIP-34464N"/>
<dbReference type="FunCoup" id="Q8IXK0">
    <property type="interactions" value="2609"/>
</dbReference>
<dbReference type="IntAct" id="Q8IXK0">
    <property type="interactions" value="112"/>
</dbReference>
<dbReference type="MINT" id="Q8IXK0"/>
<dbReference type="STRING" id="9606.ENSP00000257118"/>
<dbReference type="MoonDB" id="Q8IXK0">
    <property type="type" value="Predicted"/>
</dbReference>
<dbReference type="GlyGen" id="Q8IXK0">
    <property type="glycosylation" value="8 sites, 1 N-linked glycan (1 site), 1 O-linked glycan (1 site)"/>
</dbReference>
<dbReference type="iPTMnet" id="Q8IXK0"/>
<dbReference type="PhosphoSitePlus" id="Q8IXK0"/>
<dbReference type="SwissPalm" id="Q8IXK0"/>
<dbReference type="BioMuta" id="PHC2"/>
<dbReference type="DMDM" id="74750731"/>
<dbReference type="jPOST" id="Q8IXK0"/>
<dbReference type="MassIVE" id="Q8IXK0"/>
<dbReference type="PaxDb" id="9606-ENSP00000257118"/>
<dbReference type="PeptideAtlas" id="Q8IXK0"/>
<dbReference type="ProteomicsDB" id="71014">
    <molecule id="Q8IXK0-1"/>
</dbReference>
<dbReference type="ProteomicsDB" id="71015">
    <molecule id="Q8IXK0-2"/>
</dbReference>
<dbReference type="ProteomicsDB" id="71016">
    <molecule id="Q8IXK0-3"/>
</dbReference>
<dbReference type="ProteomicsDB" id="71017">
    <molecule id="Q8IXK0-4"/>
</dbReference>
<dbReference type="ProteomicsDB" id="71018">
    <molecule id="Q8IXK0-5"/>
</dbReference>
<dbReference type="Pumba" id="Q8IXK0"/>
<dbReference type="Antibodypedia" id="31416">
    <property type="antibodies" value="108 antibodies from 22 providers"/>
</dbReference>
<dbReference type="DNASU" id="1912"/>
<dbReference type="Ensembl" id="ENST00000257118.5">
    <molecule id="Q8IXK0-1"/>
    <property type="protein sequence ID" value="ENSP00000257118.5"/>
    <property type="gene ID" value="ENSG00000134686.21"/>
</dbReference>
<dbReference type="Ensembl" id="ENST00000373418.7">
    <molecule id="Q8IXK0-2"/>
    <property type="protein sequence ID" value="ENSP00000362517.3"/>
    <property type="gene ID" value="ENSG00000134686.21"/>
</dbReference>
<dbReference type="Ensembl" id="ENST00000683057.1">
    <molecule id="Q8IXK0-5"/>
    <property type="protein sequence ID" value="ENSP00000507877.1"/>
    <property type="gene ID" value="ENSG00000134686.21"/>
</dbReference>
<dbReference type="GeneID" id="1912"/>
<dbReference type="KEGG" id="hsa:1912"/>
<dbReference type="MANE-Select" id="ENST00000683057.1">
    <molecule id="Q8IXK0-5"/>
    <property type="protein sequence ID" value="ENSP00000507877.1"/>
    <property type="RefSeq nucleotide sequence ID" value="NM_001385109.1"/>
    <property type="RefSeq protein sequence ID" value="NP_001372038.1"/>
</dbReference>
<dbReference type="UCSC" id="uc001bxe.2">
    <molecule id="Q8IXK0-1"/>
    <property type="organism name" value="human"/>
</dbReference>
<dbReference type="AGR" id="HGNC:3183"/>
<dbReference type="CTD" id="1912"/>
<dbReference type="DisGeNET" id="1912"/>
<dbReference type="GeneCards" id="PHC2"/>
<dbReference type="HGNC" id="HGNC:3183">
    <property type="gene designation" value="PHC2"/>
</dbReference>
<dbReference type="HPA" id="ENSG00000134686">
    <property type="expression patterns" value="Low tissue specificity"/>
</dbReference>
<dbReference type="MIM" id="602979">
    <property type="type" value="gene"/>
</dbReference>
<dbReference type="neXtProt" id="NX_Q8IXK0"/>
<dbReference type="OpenTargets" id="ENSG00000134686"/>
<dbReference type="PharmGKB" id="PA27620"/>
<dbReference type="VEuPathDB" id="HostDB:ENSG00000134686"/>
<dbReference type="eggNOG" id="ENOG502QS5Q">
    <property type="taxonomic scope" value="Eukaryota"/>
</dbReference>
<dbReference type="GeneTree" id="ENSGT00940000160840"/>
<dbReference type="HOGENOM" id="CLU_047131_0_0_1"/>
<dbReference type="InParanoid" id="Q8IXK0"/>
<dbReference type="OMA" id="EGCAGRD"/>
<dbReference type="OrthoDB" id="2390104at2759"/>
<dbReference type="PAN-GO" id="Q8IXK0">
    <property type="GO annotations" value="5 GO annotations based on evolutionary models"/>
</dbReference>
<dbReference type="PhylomeDB" id="Q8IXK0"/>
<dbReference type="TreeFam" id="TF331299"/>
<dbReference type="PathwayCommons" id="Q8IXK0"/>
<dbReference type="Reactome" id="R-HSA-2559580">
    <property type="pathway name" value="Oxidative Stress Induced Senescence"/>
</dbReference>
<dbReference type="Reactome" id="R-HSA-3108214">
    <property type="pathway name" value="SUMOylation of DNA damage response and repair proteins"/>
</dbReference>
<dbReference type="Reactome" id="R-HSA-3899300">
    <property type="pathway name" value="SUMOylation of transcription cofactors"/>
</dbReference>
<dbReference type="Reactome" id="R-HSA-4551638">
    <property type="pathway name" value="SUMOylation of chromatin organization proteins"/>
</dbReference>
<dbReference type="Reactome" id="R-HSA-4570464">
    <property type="pathway name" value="SUMOylation of RNA binding proteins"/>
</dbReference>
<dbReference type="Reactome" id="R-HSA-4655427">
    <property type="pathway name" value="SUMOylation of DNA methylation proteins"/>
</dbReference>
<dbReference type="Reactome" id="R-HSA-8939243">
    <property type="pathway name" value="RUNX1 interacts with co-factors whose precise effect on RUNX1 targets is not known"/>
</dbReference>
<dbReference type="Reactome" id="R-HSA-8943724">
    <property type="pathway name" value="Regulation of PTEN gene transcription"/>
</dbReference>
<dbReference type="SignaLink" id="Q8IXK0"/>
<dbReference type="SIGNOR" id="Q8IXK0"/>
<dbReference type="BioGRID-ORCS" id="1912">
    <property type="hits" value="19 hits in 1160 CRISPR screens"/>
</dbReference>
<dbReference type="CD-CODE" id="F701F3BC">
    <property type="entry name" value="PcG body"/>
</dbReference>
<dbReference type="ChiTaRS" id="PHC2">
    <property type="organism name" value="human"/>
</dbReference>
<dbReference type="GeneWiki" id="PHC2"/>
<dbReference type="GenomeRNAi" id="1912"/>
<dbReference type="Pharos" id="Q8IXK0">
    <property type="development level" value="Tbio"/>
</dbReference>
<dbReference type="PRO" id="PR:Q8IXK0"/>
<dbReference type="Proteomes" id="UP000005640">
    <property type="component" value="Chromosome 1"/>
</dbReference>
<dbReference type="RNAct" id="Q8IXK0">
    <property type="molecule type" value="protein"/>
</dbReference>
<dbReference type="Bgee" id="ENSG00000134686">
    <property type="expression patterns" value="Expressed in right lung and 197 other cell types or tissues"/>
</dbReference>
<dbReference type="ExpressionAtlas" id="Q8IXK0">
    <property type="expression patterns" value="baseline and differential"/>
</dbReference>
<dbReference type="GO" id="GO:0000792">
    <property type="term" value="C:heterochromatin"/>
    <property type="evidence" value="ECO:0007669"/>
    <property type="project" value="Ensembl"/>
</dbReference>
<dbReference type="GO" id="GO:0005654">
    <property type="term" value="C:nucleoplasm"/>
    <property type="evidence" value="ECO:0000314"/>
    <property type="project" value="HPA"/>
</dbReference>
<dbReference type="GO" id="GO:0005634">
    <property type="term" value="C:nucleus"/>
    <property type="evidence" value="ECO:0000314"/>
    <property type="project" value="UniProtKB"/>
</dbReference>
<dbReference type="GO" id="GO:0031519">
    <property type="term" value="C:PcG protein complex"/>
    <property type="evidence" value="ECO:0000314"/>
    <property type="project" value="UniProtKB"/>
</dbReference>
<dbReference type="GO" id="GO:0035102">
    <property type="term" value="C:PRC1 complex"/>
    <property type="evidence" value="ECO:0000314"/>
    <property type="project" value="UniProtKB"/>
</dbReference>
<dbReference type="GO" id="GO:0003682">
    <property type="term" value="F:chromatin binding"/>
    <property type="evidence" value="ECO:0000318"/>
    <property type="project" value="GO_Central"/>
</dbReference>
<dbReference type="GO" id="GO:0003677">
    <property type="term" value="F:DNA binding"/>
    <property type="evidence" value="ECO:0007669"/>
    <property type="project" value="UniProtKB-KW"/>
</dbReference>
<dbReference type="GO" id="GO:0042393">
    <property type="term" value="F:histone binding"/>
    <property type="evidence" value="ECO:0000318"/>
    <property type="project" value="GO_Central"/>
</dbReference>
<dbReference type="GO" id="GO:0042802">
    <property type="term" value="F:identical protein binding"/>
    <property type="evidence" value="ECO:0000353"/>
    <property type="project" value="IntAct"/>
</dbReference>
<dbReference type="GO" id="GO:0008270">
    <property type="term" value="F:zinc ion binding"/>
    <property type="evidence" value="ECO:0007669"/>
    <property type="project" value="UniProtKB-KW"/>
</dbReference>
<dbReference type="GO" id="GO:0045892">
    <property type="term" value="P:negative regulation of DNA-templated transcription"/>
    <property type="evidence" value="ECO:0000318"/>
    <property type="project" value="GO_Central"/>
</dbReference>
<dbReference type="GO" id="GO:0007283">
    <property type="term" value="P:spermatogenesis"/>
    <property type="evidence" value="ECO:0007669"/>
    <property type="project" value="Ensembl"/>
</dbReference>
<dbReference type="CDD" id="cd09577">
    <property type="entry name" value="SAM_Ph1_2_3"/>
    <property type="match status" value="1"/>
</dbReference>
<dbReference type="FunFam" id="1.10.150.50:FF:000011">
    <property type="entry name" value="Polyhomeotic-like protein 2 isoform 1"/>
    <property type="match status" value="1"/>
</dbReference>
<dbReference type="FunFam" id="3.30.60.160:FF:000002">
    <property type="entry name" value="Polyhomeotic-like protein 2 isoform 1"/>
    <property type="match status" value="1"/>
</dbReference>
<dbReference type="Gene3D" id="3.30.60.160">
    <property type="match status" value="1"/>
</dbReference>
<dbReference type="Gene3D" id="1.10.150.50">
    <property type="entry name" value="Transcription Factor, Ets-1"/>
    <property type="match status" value="1"/>
</dbReference>
<dbReference type="InterPro" id="IPR050548">
    <property type="entry name" value="PcG_chromatin_remod_factors"/>
</dbReference>
<dbReference type="InterPro" id="IPR001660">
    <property type="entry name" value="SAM"/>
</dbReference>
<dbReference type="InterPro" id="IPR013761">
    <property type="entry name" value="SAM/pointed_sf"/>
</dbReference>
<dbReference type="InterPro" id="IPR012313">
    <property type="entry name" value="Znf_FCS"/>
</dbReference>
<dbReference type="InterPro" id="IPR038603">
    <property type="entry name" value="Znf_FCS_sf"/>
</dbReference>
<dbReference type="PANTHER" id="PTHR12247">
    <property type="entry name" value="POLYCOMB GROUP PROTEIN"/>
    <property type="match status" value="1"/>
</dbReference>
<dbReference type="PANTHER" id="PTHR12247:SF86">
    <property type="entry name" value="POLYHOMEOTIC-LIKE PROTEIN 2"/>
    <property type="match status" value="1"/>
</dbReference>
<dbReference type="Pfam" id="PF16616">
    <property type="entry name" value="PHC2_SAM_assoc"/>
    <property type="match status" value="1"/>
</dbReference>
<dbReference type="Pfam" id="PF00536">
    <property type="entry name" value="SAM_1"/>
    <property type="match status" value="1"/>
</dbReference>
<dbReference type="Pfam" id="PF21319">
    <property type="entry name" value="zf-FCS_1"/>
    <property type="match status" value="1"/>
</dbReference>
<dbReference type="SMART" id="SM00454">
    <property type="entry name" value="SAM"/>
    <property type="match status" value="1"/>
</dbReference>
<dbReference type="SUPFAM" id="SSF47769">
    <property type="entry name" value="SAM/Pointed domain"/>
    <property type="match status" value="1"/>
</dbReference>
<dbReference type="PROSITE" id="PS50105">
    <property type="entry name" value="SAM_DOMAIN"/>
    <property type="match status" value="1"/>
</dbReference>
<dbReference type="PROSITE" id="PS51024">
    <property type="entry name" value="ZF_FCS"/>
    <property type="match status" value="1"/>
</dbReference>
<reference key="1">
    <citation type="journal article" date="2002" name="Hum. Genet.">
        <title>Identification and characterisation of novel mammalian homologues of Drosophila polyhomeotic permits new insights into relationships between members of the polyhomeotic family.</title>
        <authorList>
            <person name="Tonkin E."/>
            <person name="Hagan D.-M."/>
            <person name="Li W."/>
            <person name="Strachan T."/>
        </authorList>
    </citation>
    <scope>NUCLEOTIDE SEQUENCE [MRNA] (ISOFORM 1)</scope>
</reference>
<reference key="2">
    <citation type="journal article" date="2004" name="Nat. Genet.">
        <title>Complete sequencing and characterization of 21,243 full-length human cDNAs.</title>
        <authorList>
            <person name="Ota T."/>
            <person name="Suzuki Y."/>
            <person name="Nishikawa T."/>
            <person name="Otsuki T."/>
            <person name="Sugiyama T."/>
            <person name="Irie R."/>
            <person name="Wakamatsu A."/>
            <person name="Hayashi K."/>
            <person name="Sato H."/>
            <person name="Nagai K."/>
            <person name="Kimura K."/>
            <person name="Makita H."/>
            <person name="Sekine M."/>
            <person name="Obayashi M."/>
            <person name="Nishi T."/>
            <person name="Shibahara T."/>
            <person name="Tanaka T."/>
            <person name="Ishii S."/>
            <person name="Yamamoto J."/>
            <person name="Saito K."/>
            <person name="Kawai Y."/>
            <person name="Isono Y."/>
            <person name="Nakamura Y."/>
            <person name="Nagahari K."/>
            <person name="Murakami K."/>
            <person name="Yasuda T."/>
            <person name="Iwayanagi T."/>
            <person name="Wagatsuma M."/>
            <person name="Shiratori A."/>
            <person name="Sudo H."/>
            <person name="Hosoiri T."/>
            <person name="Kaku Y."/>
            <person name="Kodaira H."/>
            <person name="Kondo H."/>
            <person name="Sugawara M."/>
            <person name="Takahashi M."/>
            <person name="Kanda K."/>
            <person name="Yokoi T."/>
            <person name="Furuya T."/>
            <person name="Kikkawa E."/>
            <person name="Omura Y."/>
            <person name="Abe K."/>
            <person name="Kamihara K."/>
            <person name="Katsuta N."/>
            <person name="Sato K."/>
            <person name="Tanikawa M."/>
            <person name="Yamazaki M."/>
            <person name="Ninomiya K."/>
            <person name="Ishibashi T."/>
            <person name="Yamashita H."/>
            <person name="Murakawa K."/>
            <person name="Fujimori K."/>
            <person name="Tanai H."/>
            <person name="Kimata M."/>
            <person name="Watanabe M."/>
            <person name="Hiraoka S."/>
            <person name="Chiba Y."/>
            <person name="Ishida S."/>
            <person name="Ono Y."/>
            <person name="Takiguchi S."/>
            <person name="Watanabe S."/>
            <person name="Yosida M."/>
            <person name="Hotuta T."/>
            <person name="Kusano J."/>
            <person name="Kanehori K."/>
            <person name="Takahashi-Fujii A."/>
            <person name="Hara H."/>
            <person name="Tanase T.-O."/>
            <person name="Nomura Y."/>
            <person name="Togiya S."/>
            <person name="Komai F."/>
            <person name="Hara R."/>
            <person name="Takeuchi K."/>
            <person name="Arita M."/>
            <person name="Imose N."/>
            <person name="Musashino K."/>
            <person name="Yuuki H."/>
            <person name="Oshima A."/>
            <person name="Sasaki N."/>
            <person name="Aotsuka S."/>
            <person name="Yoshikawa Y."/>
            <person name="Matsunawa H."/>
            <person name="Ichihara T."/>
            <person name="Shiohata N."/>
            <person name="Sano S."/>
            <person name="Moriya S."/>
            <person name="Momiyama H."/>
            <person name="Satoh N."/>
            <person name="Takami S."/>
            <person name="Terashima Y."/>
            <person name="Suzuki O."/>
            <person name="Nakagawa S."/>
            <person name="Senoh A."/>
            <person name="Mizoguchi H."/>
            <person name="Goto Y."/>
            <person name="Shimizu F."/>
            <person name="Wakebe H."/>
            <person name="Hishigaki H."/>
            <person name="Watanabe T."/>
            <person name="Sugiyama A."/>
            <person name="Takemoto M."/>
            <person name="Kawakami B."/>
            <person name="Yamazaki M."/>
            <person name="Watanabe K."/>
            <person name="Kumagai A."/>
            <person name="Itakura S."/>
            <person name="Fukuzumi Y."/>
            <person name="Fujimori Y."/>
            <person name="Komiyama M."/>
            <person name="Tashiro H."/>
            <person name="Tanigami A."/>
            <person name="Fujiwara T."/>
            <person name="Ono T."/>
            <person name="Yamada K."/>
            <person name="Fujii Y."/>
            <person name="Ozaki K."/>
            <person name="Hirao M."/>
            <person name="Ohmori Y."/>
            <person name="Kawabata A."/>
            <person name="Hikiji T."/>
            <person name="Kobatake N."/>
            <person name="Inagaki H."/>
            <person name="Ikema Y."/>
            <person name="Okamoto S."/>
            <person name="Okitani R."/>
            <person name="Kawakami T."/>
            <person name="Noguchi S."/>
            <person name="Itoh T."/>
            <person name="Shigeta K."/>
            <person name="Senba T."/>
            <person name="Matsumura K."/>
            <person name="Nakajima Y."/>
            <person name="Mizuno T."/>
            <person name="Morinaga M."/>
            <person name="Sasaki M."/>
            <person name="Togashi T."/>
            <person name="Oyama M."/>
            <person name="Hata H."/>
            <person name="Watanabe M."/>
            <person name="Komatsu T."/>
            <person name="Mizushima-Sugano J."/>
            <person name="Satoh T."/>
            <person name="Shirai Y."/>
            <person name="Takahashi Y."/>
            <person name="Nakagawa K."/>
            <person name="Okumura K."/>
            <person name="Nagase T."/>
            <person name="Nomura N."/>
            <person name="Kikuchi H."/>
            <person name="Masuho Y."/>
            <person name="Yamashita R."/>
            <person name="Nakai K."/>
            <person name="Yada T."/>
            <person name="Nakamura Y."/>
            <person name="Ohara O."/>
            <person name="Isogai T."/>
            <person name="Sugano S."/>
        </authorList>
    </citation>
    <scope>NUCLEOTIDE SEQUENCE [LARGE SCALE MRNA] (ISOFORMS 3 AND 5)</scope>
    <source>
        <tissue>Testis</tissue>
        <tissue>Trachea</tissue>
    </source>
</reference>
<reference key="3">
    <citation type="journal article" date="2006" name="Nature">
        <title>The DNA sequence and biological annotation of human chromosome 1.</title>
        <authorList>
            <person name="Gregory S.G."/>
            <person name="Barlow K.F."/>
            <person name="McLay K.E."/>
            <person name="Kaul R."/>
            <person name="Swarbreck D."/>
            <person name="Dunham A."/>
            <person name="Scott C.E."/>
            <person name="Howe K.L."/>
            <person name="Woodfine K."/>
            <person name="Spencer C.C.A."/>
            <person name="Jones M.C."/>
            <person name="Gillson C."/>
            <person name="Searle S."/>
            <person name="Zhou Y."/>
            <person name="Kokocinski F."/>
            <person name="McDonald L."/>
            <person name="Evans R."/>
            <person name="Phillips K."/>
            <person name="Atkinson A."/>
            <person name="Cooper R."/>
            <person name="Jones C."/>
            <person name="Hall R.E."/>
            <person name="Andrews T.D."/>
            <person name="Lloyd C."/>
            <person name="Ainscough R."/>
            <person name="Almeida J.P."/>
            <person name="Ambrose K.D."/>
            <person name="Anderson F."/>
            <person name="Andrew R.W."/>
            <person name="Ashwell R.I.S."/>
            <person name="Aubin K."/>
            <person name="Babbage A.K."/>
            <person name="Bagguley C.L."/>
            <person name="Bailey J."/>
            <person name="Beasley H."/>
            <person name="Bethel G."/>
            <person name="Bird C.P."/>
            <person name="Bray-Allen S."/>
            <person name="Brown J.Y."/>
            <person name="Brown A.J."/>
            <person name="Buckley D."/>
            <person name="Burton J."/>
            <person name="Bye J."/>
            <person name="Carder C."/>
            <person name="Chapman J.C."/>
            <person name="Clark S.Y."/>
            <person name="Clarke G."/>
            <person name="Clee C."/>
            <person name="Cobley V."/>
            <person name="Collier R.E."/>
            <person name="Corby N."/>
            <person name="Coville G.J."/>
            <person name="Davies J."/>
            <person name="Deadman R."/>
            <person name="Dunn M."/>
            <person name="Earthrowl M."/>
            <person name="Ellington A.G."/>
            <person name="Errington H."/>
            <person name="Frankish A."/>
            <person name="Frankland J."/>
            <person name="French L."/>
            <person name="Garner P."/>
            <person name="Garnett J."/>
            <person name="Gay L."/>
            <person name="Ghori M.R.J."/>
            <person name="Gibson R."/>
            <person name="Gilby L.M."/>
            <person name="Gillett W."/>
            <person name="Glithero R.J."/>
            <person name="Grafham D.V."/>
            <person name="Griffiths C."/>
            <person name="Griffiths-Jones S."/>
            <person name="Grocock R."/>
            <person name="Hammond S."/>
            <person name="Harrison E.S.I."/>
            <person name="Hart E."/>
            <person name="Haugen E."/>
            <person name="Heath P.D."/>
            <person name="Holmes S."/>
            <person name="Holt K."/>
            <person name="Howden P.J."/>
            <person name="Hunt A.R."/>
            <person name="Hunt S.E."/>
            <person name="Hunter G."/>
            <person name="Isherwood J."/>
            <person name="James R."/>
            <person name="Johnson C."/>
            <person name="Johnson D."/>
            <person name="Joy A."/>
            <person name="Kay M."/>
            <person name="Kershaw J.K."/>
            <person name="Kibukawa M."/>
            <person name="Kimberley A.M."/>
            <person name="King A."/>
            <person name="Knights A.J."/>
            <person name="Lad H."/>
            <person name="Laird G."/>
            <person name="Lawlor S."/>
            <person name="Leongamornlert D.A."/>
            <person name="Lloyd D.M."/>
            <person name="Loveland J."/>
            <person name="Lovell J."/>
            <person name="Lush M.J."/>
            <person name="Lyne R."/>
            <person name="Martin S."/>
            <person name="Mashreghi-Mohammadi M."/>
            <person name="Matthews L."/>
            <person name="Matthews N.S.W."/>
            <person name="McLaren S."/>
            <person name="Milne S."/>
            <person name="Mistry S."/>
            <person name="Moore M.J.F."/>
            <person name="Nickerson T."/>
            <person name="O'Dell C.N."/>
            <person name="Oliver K."/>
            <person name="Palmeiri A."/>
            <person name="Palmer S.A."/>
            <person name="Parker A."/>
            <person name="Patel D."/>
            <person name="Pearce A.V."/>
            <person name="Peck A.I."/>
            <person name="Pelan S."/>
            <person name="Phelps K."/>
            <person name="Phillimore B.J."/>
            <person name="Plumb R."/>
            <person name="Rajan J."/>
            <person name="Raymond C."/>
            <person name="Rouse G."/>
            <person name="Saenphimmachak C."/>
            <person name="Sehra H.K."/>
            <person name="Sheridan E."/>
            <person name="Shownkeen R."/>
            <person name="Sims S."/>
            <person name="Skuce C.D."/>
            <person name="Smith M."/>
            <person name="Steward C."/>
            <person name="Subramanian S."/>
            <person name="Sycamore N."/>
            <person name="Tracey A."/>
            <person name="Tromans A."/>
            <person name="Van Helmond Z."/>
            <person name="Wall M."/>
            <person name="Wallis J.M."/>
            <person name="White S."/>
            <person name="Whitehead S.L."/>
            <person name="Wilkinson J.E."/>
            <person name="Willey D.L."/>
            <person name="Williams H."/>
            <person name="Wilming L."/>
            <person name="Wray P.W."/>
            <person name="Wu Z."/>
            <person name="Coulson A."/>
            <person name="Vaudin M."/>
            <person name="Sulston J.E."/>
            <person name="Durbin R.M."/>
            <person name="Hubbard T."/>
            <person name="Wooster R."/>
            <person name="Dunham I."/>
            <person name="Carter N.P."/>
            <person name="McVean G."/>
            <person name="Ross M.T."/>
            <person name="Harrow J."/>
            <person name="Olson M.V."/>
            <person name="Beck S."/>
            <person name="Rogers J."/>
            <person name="Bentley D.R."/>
        </authorList>
    </citation>
    <scope>NUCLEOTIDE SEQUENCE [LARGE SCALE GENOMIC DNA]</scope>
</reference>
<reference key="4">
    <citation type="submission" date="2005-09" db="EMBL/GenBank/DDBJ databases">
        <authorList>
            <person name="Mural R.J."/>
            <person name="Istrail S."/>
            <person name="Sutton G.G."/>
            <person name="Florea L."/>
            <person name="Halpern A.L."/>
            <person name="Mobarry C.M."/>
            <person name="Lippert R."/>
            <person name="Walenz B."/>
            <person name="Shatkay H."/>
            <person name="Dew I."/>
            <person name="Miller J.R."/>
            <person name="Flanigan M.J."/>
            <person name="Edwards N.J."/>
            <person name="Bolanos R."/>
            <person name="Fasulo D."/>
            <person name="Halldorsson B.V."/>
            <person name="Hannenhalli S."/>
            <person name="Turner R."/>
            <person name="Yooseph S."/>
            <person name="Lu F."/>
            <person name="Nusskern D.R."/>
            <person name="Shue B.C."/>
            <person name="Zheng X.H."/>
            <person name="Zhong F."/>
            <person name="Delcher A.L."/>
            <person name="Huson D.H."/>
            <person name="Kravitz S.A."/>
            <person name="Mouchard L."/>
            <person name="Reinert K."/>
            <person name="Remington K.A."/>
            <person name="Clark A.G."/>
            <person name="Waterman M.S."/>
            <person name="Eichler E.E."/>
            <person name="Adams M.D."/>
            <person name="Hunkapiller M.W."/>
            <person name="Myers E.W."/>
            <person name="Venter J.C."/>
        </authorList>
    </citation>
    <scope>NUCLEOTIDE SEQUENCE [LARGE SCALE GENOMIC DNA]</scope>
</reference>
<reference key="5">
    <citation type="journal article" date="2004" name="Genome Res.">
        <title>The status, quality, and expansion of the NIH full-length cDNA project: the Mammalian Gene Collection (MGC).</title>
        <authorList>
            <consortium name="The MGC Project Team"/>
        </authorList>
    </citation>
    <scope>NUCLEOTIDE SEQUENCE [LARGE SCALE MRNA] (ISOFORMS 2; 4 AND 5)</scope>
    <scope>VARIANT MET-475</scope>
    <source>
        <tissue>Cerebellum</tissue>
        <tissue>Hypothalamus</tissue>
        <tissue>Placenta</tissue>
        <tissue>Prostate</tissue>
        <tissue>Retina</tissue>
    </source>
</reference>
<reference key="6">
    <citation type="journal article" date="2000" name="Mol. Cell. Biochem.">
        <title>A set of proteins interacting with transcription factor Sp1 identified in a two-hybrid screening.</title>
        <authorList>
            <person name="Gunther M."/>
            <person name="Laithier M."/>
            <person name="Brison O."/>
        </authorList>
    </citation>
    <scope>NUCLEOTIDE SEQUENCE [MRNA] OF 1-266 (ISOFORM 1)</scope>
    <scope>INTERACTION WITH SP1</scope>
    <source>
        <tissue>Colon carcinoma</tissue>
    </source>
</reference>
<reference key="7">
    <citation type="journal article" date="1997" name="Mol. Cell. Biol.">
        <title>Identification and characterization of interactions between the vertebrate polycomb-group protein BMI1 and human homologs of polyhomeotic.</title>
        <authorList>
            <person name="Gunster M.J."/>
            <person name="Satijn D.P.E."/>
            <person name="Hamer K.M."/>
            <person name="den Blaauwen J.L."/>
            <person name="de Bruijn D."/>
            <person name="Alkema M.J."/>
            <person name="van Lohuizen M."/>
            <person name="van Driel R."/>
            <person name="Otte A.P."/>
        </authorList>
    </citation>
    <scope>INTERACTION WITH BMI1 AND PHC1</scope>
</reference>
<reference key="8">
    <citation type="journal article" date="1997" name="Mol. Cell. Biol.">
        <title>RING1 is associated with the polycomb group protein complex and acts as a transcriptional repressor.</title>
        <authorList>
            <person name="Satijn D.P.E."/>
            <person name="Gunster M.J."/>
            <person name="van der Vlag J."/>
            <person name="Hamer K.M."/>
            <person name="Schul W."/>
            <person name="Alkema M.J."/>
            <person name="Saurin A.J."/>
            <person name="Freemont P.S."/>
            <person name="van Driel R."/>
            <person name="Otte A.P."/>
        </authorList>
    </citation>
    <scope>INTERACTION WITH RING1; PHC1 AND BMI1</scope>
</reference>
<reference key="9">
    <citation type="journal article" date="2002" name="Mol. Cell. Biol.">
        <title>The core of the polycomb repressive complex is compositionally and functionally conserved in flies and humans.</title>
        <authorList>
            <person name="Levine S.S."/>
            <person name="Weiss A."/>
            <person name="Erdjument-Bromage H."/>
            <person name="Shao Z."/>
            <person name="Tempst P."/>
            <person name="Kingston R.E."/>
        </authorList>
    </citation>
    <scope>IDENTIFICATION BY MASS SPECTROMETRY</scope>
    <scope>IDENTIFICATION IN A PRC1-LIKE HPRC-H COMPLEX WITH BMI1; CBX2; CBX4; CBX8; PHC1; PHC3; RING1 AND RNF2</scope>
</reference>
<reference key="10">
    <citation type="journal article" date="2004" name="FEBS Lett.">
        <title>P66(ShcA) interacts with MAPKAP kinase 2 and regulates its activity.</title>
        <authorList>
            <person name="Yannoni Y.M."/>
            <person name="Gaestel M."/>
            <person name="Lin L.L."/>
        </authorList>
    </citation>
    <scope>INTERACTION WITH MAPKAPK2</scope>
</reference>
<reference key="11">
    <citation type="journal article" date="2004" name="Nature">
        <title>Role of histone H2A ubiquitination in Polycomb silencing.</title>
        <authorList>
            <person name="Wang H."/>
            <person name="Wang L."/>
            <person name="Erdjument-Bromage H."/>
            <person name="Vidal M."/>
            <person name="Tempst P."/>
            <person name="Jones R.S."/>
            <person name="Zhang Y."/>
        </authorList>
    </citation>
    <scope>IDENTIFICATION IN A PRC1-LIKE COMPLEX</scope>
</reference>
<reference key="12">
    <citation type="journal article" date="2007" name="Science">
        <title>ATM and ATR substrate analysis reveals extensive protein networks responsive to DNA damage.</title>
        <authorList>
            <person name="Matsuoka S."/>
            <person name="Ballif B.A."/>
            <person name="Smogorzewska A."/>
            <person name="McDonald E.R. III"/>
            <person name="Hurov K.E."/>
            <person name="Luo J."/>
            <person name="Bakalarski C.E."/>
            <person name="Zhao Z."/>
            <person name="Solimini N."/>
            <person name="Lerenthal Y."/>
            <person name="Shiloh Y."/>
            <person name="Gygi S.P."/>
            <person name="Elledge S.J."/>
        </authorList>
    </citation>
    <scope>IDENTIFICATION BY MASS SPECTROMETRY [LARGE SCALE ANALYSIS]</scope>
    <source>
        <tissue>Embryonic kidney</tissue>
    </source>
</reference>
<reference key="13">
    <citation type="journal article" date="2008" name="Proc. Natl. Acad. Sci. U.S.A.">
        <title>A quantitative atlas of mitotic phosphorylation.</title>
        <authorList>
            <person name="Dephoure N."/>
            <person name="Zhou C."/>
            <person name="Villen J."/>
            <person name="Beausoleil S.A."/>
            <person name="Bakalarski C.E."/>
            <person name="Elledge S.J."/>
            <person name="Gygi S.P."/>
        </authorList>
    </citation>
    <scope>IDENTIFICATION BY MASS SPECTROMETRY [LARGE SCALE ANALYSIS]</scope>
    <source>
        <tissue>Cervix carcinoma</tissue>
    </source>
</reference>
<reference key="14">
    <citation type="journal article" date="2009" name="PLoS ONE">
        <title>Several distinct polycomb complexes regulate and co-localize on the INK4a tumor suppressor locus.</title>
        <authorList>
            <person name="Maertens G.N."/>
            <person name="El Messaoudi-Aubert S."/>
            <person name="Racek T."/>
            <person name="Stock J.K."/>
            <person name="Nicholls J."/>
            <person name="Rodriguez-Niedenfuhr M."/>
            <person name="Gil J."/>
            <person name="Peters G."/>
        </authorList>
    </citation>
    <scope>IDENTIFICATION IN A PRC1-LIKE COMPLEX</scope>
</reference>
<reference key="15">
    <citation type="journal article" date="2009" name="Sci. Signal.">
        <title>Quantitative phosphoproteomic analysis of T cell receptor signaling reveals system-wide modulation of protein-protein interactions.</title>
        <authorList>
            <person name="Mayya V."/>
            <person name="Lundgren D.H."/>
            <person name="Hwang S.-I."/>
            <person name="Rezaul K."/>
            <person name="Wu L."/>
            <person name="Eng J.K."/>
            <person name="Rodionov V."/>
            <person name="Han D.K."/>
        </authorList>
    </citation>
    <scope>PHOSPHORYLATION [LARGE SCALE ANALYSIS] AT SER-621</scope>
    <scope>IDENTIFICATION BY MASS SPECTROMETRY [LARGE SCALE ANALYSIS]</scope>
    <source>
        <tissue>Leukemic T-cell</tissue>
    </source>
</reference>
<reference key="16">
    <citation type="journal article" date="2010" name="Sci. Signal.">
        <title>Quantitative phosphoproteomics reveals widespread full phosphorylation site occupancy during mitosis.</title>
        <authorList>
            <person name="Olsen J.V."/>
            <person name="Vermeulen M."/>
            <person name="Santamaria A."/>
            <person name="Kumar C."/>
            <person name="Miller M.L."/>
            <person name="Jensen L.J."/>
            <person name="Gnad F."/>
            <person name="Cox J."/>
            <person name="Jensen T.S."/>
            <person name="Nigg E.A."/>
            <person name="Brunak S."/>
            <person name="Mann M."/>
        </authorList>
    </citation>
    <scope>IDENTIFICATION BY MASS SPECTROMETRY [LARGE SCALE ANALYSIS]</scope>
    <source>
        <tissue>Cervix carcinoma</tissue>
    </source>
</reference>
<reference key="17">
    <citation type="journal article" date="2011" name="Mol. Cell. Proteomics">
        <title>Interaction proteomics analysis of polycomb proteins defines distinct PRC1 Complexes in mammalian cells.</title>
        <authorList>
            <person name="Vandamme J."/>
            <person name="Volkel P."/>
            <person name="Rosnoblet C."/>
            <person name="Le Faou P."/>
            <person name="Angrand P.O."/>
        </authorList>
    </citation>
    <scope>IDENTIFICATION IN A PRC1-LIKE COMPLEX</scope>
    <scope>INTERACTION WITH CBX4</scope>
    <scope>SUBCELLULAR LOCATION</scope>
</reference>
<reference key="18">
    <citation type="journal article" date="2013" name="J. Proteome Res.">
        <title>Toward a comprehensive characterization of a human cancer cell phosphoproteome.</title>
        <authorList>
            <person name="Zhou H."/>
            <person name="Di Palma S."/>
            <person name="Preisinger C."/>
            <person name="Peng M."/>
            <person name="Polat A.N."/>
            <person name="Heck A.J."/>
            <person name="Mohammed S."/>
        </authorList>
    </citation>
    <scope>PHOSPHORYLATION [LARGE SCALE ANALYSIS] AT THR-619; SER-621 AND SER-751</scope>
    <scope>IDENTIFICATION BY MASS SPECTROMETRY [LARGE SCALE ANALYSIS]</scope>
    <source>
        <tissue>Cervix carcinoma</tissue>
        <tissue>Erythroleukemia</tissue>
    </source>
</reference>
<reference key="19">
    <citation type="journal article" date="2017" name="Nat. Struct. Mol. Biol.">
        <title>Site-specific mapping of the human SUMO proteome reveals co-modification with phosphorylation.</title>
        <authorList>
            <person name="Hendriks I.A."/>
            <person name="Lyon D."/>
            <person name="Young C."/>
            <person name="Jensen L.J."/>
            <person name="Vertegaal A.C."/>
            <person name="Nielsen M.L."/>
        </authorList>
    </citation>
    <scope>SUMOYLATION [LARGE SCALE ANALYSIS] AT LYS-598; LYS-600; LYS-632; LYS-702 AND LYS-847</scope>
    <scope>IDENTIFICATION BY MASS SPECTROMETRY [LARGE SCALE ANALYSIS]</scope>
</reference>
<gene>
    <name type="primary">PHC2</name>
    <name type="synonym">EDR2</name>
    <name type="synonym">PH2</name>
</gene>
<name>PHC2_HUMAN</name>
<feature type="chain" id="PRO_0000076286" description="Polyhomeotic-like protein 2">
    <location>
        <begin position="1"/>
        <end position="858"/>
    </location>
</feature>
<feature type="domain" description="SAM" evidence="2">
    <location>
        <begin position="794"/>
        <end position="858"/>
    </location>
</feature>
<feature type="zinc finger region" description="FCS-type" evidence="3">
    <location>
        <begin position="633"/>
        <end position="667"/>
    </location>
</feature>
<feature type="region of interest" description="Disordered" evidence="1">
    <location>
        <begin position="1"/>
        <end position="76"/>
    </location>
</feature>
<feature type="region of interest" description="Interaction with BMI1" evidence="1">
    <location>
        <begin position="33"/>
        <end position="53"/>
    </location>
</feature>
<feature type="region of interest" description="Disordered" evidence="4">
    <location>
        <begin position="230"/>
        <end position="307"/>
    </location>
</feature>
<feature type="region of interest" description="Disordered" evidence="4">
    <location>
        <begin position="337"/>
        <end position="388"/>
    </location>
</feature>
<feature type="region of interest" description="Disordered" evidence="4">
    <location>
        <begin position="407"/>
        <end position="444"/>
    </location>
</feature>
<feature type="region of interest" description="Disordered" evidence="4">
    <location>
        <begin position="473"/>
        <end position="493"/>
    </location>
</feature>
<feature type="region of interest" description="Disordered" evidence="4">
    <location>
        <begin position="529"/>
        <end position="561"/>
    </location>
</feature>
<feature type="region of interest" description="Disordered" evidence="4">
    <location>
        <begin position="688"/>
        <end position="720"/>
    </location>
</feature>
<feature type="region of interest" description="Disordered" evidence="4">
    <location>
        <begin position="732"/>
        <end position="768"/>
    </location>
</feature>
<feature type="short sequence motif" description="HD1">
    <location>
        <begin position="558"/>
        <end position="587"/>
    </location>
</feature>
<feature type="compositionally biased region" description="Low complexity" evidence="4">
    <location>
        <begin position="10"/>
        <end position="34"/>
    </location>
</feature>
<feature type="compositionally biased region" description="Low complexity" evidence="4">
    <location>
        <begin position="230"/>
        <end position="241"/>
    </location>
</feature>
<feature type="compositionally biased region" description="Polar residues" evidence="4">
    <location>
        <begin position="265"/>
        <end position="274"/>
    </location>
</feature>
<feature type="compositionally biased region" description="Low complexity" evidence="4">
    <location>
        <begin position="337"/>
        <end position="358"/>
    </location>
</feature>
<feature type="compositionally biased region" description="Polar residues" evidence="4">
    <location>
        <begin position="379"/>
        <end position="388"/>
    </location>
</feature>
<feature type="compositionally biased region" description="Basic and acidic residues" evidence="4">
    <location>
        <begin position="473"/>
        <end position="483"/>
    </location>
</feature>
<feature type="compositionally biased region" description="Low complexity" evidence="4">
    <location>
        <begin position="537"/>
        <end position="551"/>
    </location>
</feature>
<feature type="binding site" evidence="3">
    <location>
        <position position="642"/>
    </location>
    <ligand>
        <name>Zn(2+)</name>
        <dbReference type="ChEBI" id="CHEBI:29105"/>
    </ligand>
</feature>
<feature type="binding site" evidence="3">
    <location>
        <position position="645"/>
    </location>
    <ligand>
        <name>Zn(2+)</name>
        <dbReference type="ChEBI" id="CHEBI:29105"/>
    </ligand>
</feature>
<feature type="binding site" evidence="3">
    <location>
        <position position="661"/>
    </location>
    <ligand>
        <name>Zn(2+)</name>
        <dbReference type="ChEBI" id="CHEBI:29105"/>
    </ligand>
</feature>
<feature type="binding site" evidence="3">
    <location>
        <position position="665"/>
    </location>
    <ligand>
        <name>Zn(2+)</name>
        <dbReference type="ChEBI" id="CHEBI:29105"/>
    </ligand>
</feature>
<feature type="modified residue" description="Phosphothreonine" evidence="18">
    <location>
        <position position="619"/>
    </location>
</feature>
<feature type="modified residue" description="Phosphoserine" evidence="17 18">
    <location>
        <position position="621"/>
    </location>
</feature>
<feature type="modified residue" description="Phosphoserine" evidence="18">
    <location>
        <position position="751"/>
    </location>
</feature>
<feature type="cross-link" description="Glycyl lysine isopeptide (Lys-Gly) (interchain with G-Cter in SUMO2)" evidence="19">
    <location>
        <position position="598"/>
    </location>
</feature>
<feature type="cross-link" description="Glycyl lysine isopeptide (Lys-Gly) (interchain with G-Cter in SUMO2)" evidence="19">
    <location>
        <position position="600"/>
    </location>
</feature>
<feature type="cross-link" description="Glycyl lysine isopeptide (Lys-Gly) (interchain with G-Cter in SUMO2)" evidence="19">
    <location>
        <position position="632"/>
    </location>
</feature>
<feature type="cross-link" description="Glycyl lysine isopeptide (Lys-Gly) (interchain with G-Cter in SUMO2)" evidence="19">
    <location>
        <position position="702"/>
    </location>
</feature>
<feature type="cross-link" description="Glycyl lysine isopeptide (Lys-Gly) (interchain with G-Cter in SUMO2)" evidence="19">
    <location>
        <position position="847"/>
    </location>
</feature>
<feature type="splice variant" id="VSP_016914" description="In isoform 3." evidence="14">
    <location>
        <begin position="1"/>
        <end position="585"/>
    </location>
</feature>
<feature type="splice variant" id="VSP_016915" description="In isoform 2." evidence="15">
    <location>
        <begin position="1"/>
        <end position="535"/>
    </location>
</feature>
<feature type="splice variant" id="VSP_027217" description="In isoform 4." evidence="15">
    <location>
        <begin position="193"/>
        <end position="221"/>
    </location>
</feature>
<feature type="splice variant" id="VSP_039755" description="In isoform 5." evidence="14 15">
    <original>P</original>
    <variation>PV</variation>
    <location>
        <position position="463"/>
    </location>
</feature>
<feature type="splice variant" id="VSP_016916" description="In isoform 3." evidence="14">
    <original>P</original>
    <variation>M</variation>
    <location>
        <position position="586"/>
    </location>
</feature>
<feature type="splice variant" id="VSP_016917" description="In isoform 3." evidence="14">
    <original>CQEIAEEFRAQEIDGQALLLLKEDHLMSAMNIKLGPALKIYARI</original>
    <variation>LPSSFPKGHETSIYSLSKHLRHSRFPQSPSGSCLWPVLRPRPHL</variation>
    <location>
        <begin position="809"/>
        <end position="852"/>
    </location>
</feature>
<feature type="splice variant" id="VSP_016918" description="In isoform 3." evidence="14">
    <location>
        <begin position="853"/>
        <end position="858"/>
    </location>
</feature>
<feature type="sequence variant" id="VAR_051276" description="In dbSNP:rs10914692.">
    <original>P</original>
    <variation>S</variation>
    <location>
        <position position="254"/>
    </location>
</feature>
<feature type="sequence variant" id="VAR_051277" description="In dbSNP:rs12026290." evidence="9">
    <original>V</original>
    <variation>M</variation>
    <location>
        <position position="475"/>
    </location>
</feature>
<feature type="sequence conflict" description="In Ref. 2; BAC87622." evidence="16" ref="2">
    <original>S</original>
    <variation>N</variation>
    <location>
        <position position="745"/>
    </location>
</feature>
<feature type="sequence conflict" description="In Ref. 2; BAC87622." evidence="16" ref="2">
    <original>D</original>
    <variation>E</variation>
    <location>
        <position position="778"/>
    </location>
</feature>
<feature type="sequence conflict" description="In Ref. 5; AAH28396." evidence="16" ref="5">
    <original>A</original>
    <variation>E</variation>
    <location>
        <position position="813"/>
    </location>
</feature>
<proteinExistence type="evidence at protein level"/>